<proteinExistence type="inferred from homology"/>
<evidence type="ECO:0000255" key="1">
    <source>
        <dbReference type="HAMAP-Rule" id="MF_00093"/>
    </source>
</evidence>
<evidence type="ECO:0000256" key="2">
    <source>
        <dbReference type="SAM" id="MobiDB-lite"/>
    </source>
</evidence>
<name>RF1_SHEB5</name>
<organism>
    <name type="scientific">Shewanella baltica (strain OS155 / ATCC BAA-1091)</name>
    <dbReference type="NCBI Taxonomy" id="325240"/>
    <lineage>
        <taxon>Bacteria</taxon>
        <taxon>Pseudomonadati</taxon>
        <taxon>Pseudomonadota</taxon>
        <taxon>Gammaproteobacteria</taxon>
        <taxon>Alteromonadales</taxon>
        <taxon>Shewanellaceae</taxon>
        <taxon>Shewanella</taxon>
    </lineage>
</organism>
<comment type="function">
    <text evidence="1">Peptide chain release factor 1 directs the termination of translation in response to the peptide chain termination codons UAG and UAA.</text>
</comment>
<comment type="subcellular location">
    <subcellularLocation>
        <location evidence="1">Cytoplasm</location>
    </subcellularLocation>
</comment>
<comment type="PTM">
    <text evidence="1">Methylated by PrmC. Methylation increases the termination efficiency of RF1.</text>
</comment>
<comment type="similarity">
    <text evidence="1">Belongs to the prokaryotic/mitochondrial release factor family.</text>
</comment>
<protein>
    <recommendedName>
        <fullName evidence="1">Peptide chain release factor 1</fullName>
        <shortName evidence="1">RF-1</shortName>
    </recommendedName>
</protein>
<feature type="chain" id="PRO_1000004947" description="Peptide chain release factor 1">
    <location>
        <begin position="1"/>
        <end position="363"/>
    </location>
</feature>
<feature type="region of interest" description="Disordered" evidence="2">
    <location>
        <begin position="286"/>
        <end position="305"/>
    </location>
</feature>
<feature type="compositionally biased region" description="Basic and acidic residues" evidence="2">
    <location>
        <begin position="286"/>
        <end position="296"/>
    </location>
</feature>
<feature type="modified residue" description="N5-methylglutamine" evidence="1">
    <location>
        <position position="237"/>
    </location>
</feature>
<sequence>MKESVIRKLEGLLERNEEVMALLGDASVISDQDRFRALSKEYAQLEDVVAGFKAYQQAQVDLDSAKEMLEEDDAEMREMAQEEMKAAKAKLEHLEDELQILLLPKDPDDDKNAFVEIRAGAGGDEAAIFAGDLFRMYSRYAEANRWQIEIMSCNEGEHGGFKEVIMKVSGDGVYGKLKFESGGHRVQRVPETESQGRVHTSAVTVVVLHEVPEAEAISINPADLKVDTFRSSGAGGQHVNKTDSAIRITHIPTGIVVECQDQRSQHKNRAQAMSVLAARIQALEDEKRRSAEESTRRSLVASGDRSERVRTYNFPQGRVSEHRINLTLYRLNEVMEGDLDAILLPLMQEHQADQLAALADEQG</sequence>
<dbReference type="EMBL" id="CP000563">
    <property type="protein sequence ID" value="ABN60224.1"/>
    <property type="molecule type" value="Genomic_DNA"/>
</dbReference>
<dbReference type="RefSeq" id="WP_011845827.1">
    <property type="nucleotide sequence ID" value="NC_009052.1"/>
</dbReference>
<dbReference type="SMR" id="A3D0G1"/>
<dbReference type="STRING" id="325240.Sbal_0696"/>
<dbReference type="KEGG" id="sbl:Sbal_0696"/>
<dbReference type="HOGENOM" id="CLU_036856_0_1_6"/>
<dbReference type="OrthoDB" id="9806673at2"/>
<dbReference type="Proteomes" id="UP000001557">
    <property type="component" value="Chromosome"/>
</dbReference>
<dbReference type="GO" id="GO:0005737">
    <property type="term" value="C:cytoplasm"/>
    <property type="evidence" value="ECO:0007669"/>
    <property type="project" value="UniProtKB-SubCell"/>
</dbReference>
<dbReference type="GO" id="GO:0016149">
    <property type="term" value="F:translation release factor activity, codon specific"/>
    <property type="evidence" value="ECO:0007669"/>
    <property type="project" value="UniProtKB-UniRule"/>
</dbReference>
<dbReference type="FunFam" id="3.30.160.20:FF:000004">
    <property type="entry name" value="Peptide chain release factor 1"/>
    <property type="match status" value="1"/>
</dbReference>
<dbReference type="FunFam" id="3.30.70.1660:FF:000002">
    <property type="entry name" value="Peptide chain release factor 1"/>
    <property type="match status" value="1"/>
</dbReference>
<dbReference type="FunFam" id="3.30.70.1660:FF:000004">
    <property type="entry name" value="Peptide chain release factor 1"/>
    <property type="match status" value="1"/>
</dbReference>
<dbReference type="Gene3D" id="3.30.160.20">
    <property type="match status" value="1"/>
</dbReference>
<dbReference type="Gene3D" id="3.30.70.1660">
    <property type="match status" value="2"/>
</dbReference>
<dbReference type="Gene3D" id="6.10.140.1950">
    <property type="match status" value="1"/>
</dbReference>
<dbReference type="HAMAP" id="MF_00093">
    <property type="entry name" value="Rel_fac_1"/>
    <property type="match status" value="1"/>
</dbReference>
<dbReference type="InterPro" id="IPR005139">
    <property type="entry name" value="PCRF"/>
</dbReference>
<dbReference type="InterPro" id="IPR000352">
    <property type="entry name" value="Pep_chain_release_fac_I"/>
</dbReference>
<dbReference type="InterPro" id="IPR045853">
    <property type="entry name" value="Pep_chain_release_fac_I_sf"/>
</dbReference>
<dbReference type="InterPro" id="IPR050057">
    <property type="entry name" value="Prokaryotic/Mito_RF"/>
</dbReference>
<dbReference type="InterPro" id="IPR004373">
    <property type="entry name" value="RF-1"/>
</dbReference>
<dbReference type="NCBIfam" id="TIGR00019">
    <property type="entry name" value="prfA"/>
    <property type="match status" value="1"/>
</dbReference>
<dbReference type="NCBIfam" id="NF001859">
    <property type="entry name" value="PRK00591.1"/>
    <property type="match status" value="1"/>
</dbReference>
<dbReference type="PANTHER" id="PTHR43804">
    <property type="entry name" value="LD18447P"/>
    <property type="match status" value="1"/>
</dbReference>
<dbReference type="PANTHER" id="PTHR43804:SF7">
    <property type="entry name" value="LD18447P"/>
    <property type="match status" value="1"/>
</dbReference>
<dbReference type="Pfam" id="PF03462">
    <property type="entry name" value="PCRF"/>
    <property type="match status" value="1"/>
</dbReference>
<dbReference type="Pfam" id="PF00472">
    <property type="entry name" value="RF-1"/>
    <property type="match status" value="1"/>
</dbReference>
<dbReference type="SMART" id="SM00937">
    <property type="entry name" value="PCRF"/>
    <property type="match status" value="1"/>
</dbReference>
<dbReference type="SUPFAM" id="SSF75620">
    <property type="entry name" value="Release factor"/>
    <property type="match status" value="1"/>
</dbReference>
<dbReference type="PROSITE" id="PS00745">
    <property type="entry name" value="RF_PROK_I"/>
    <property type="match status" value="1"/>
</dbReference>
<gene>
    <name evidence="1" type="primary">prfA</name>
    <name type="ordered locus">Sbal_0696</name>
</gene>
<reference key="1">
    <citation type="submission" date="2007-02" db="EMBL/GenBank/DDBJ databases">
        <title>Complete sequence of chromosome of Shewanella baltica OS155.</title>
        <authorList>
            <consortium name="US DOE Joint Genome Institute"/>
            <person name="Copeland A."/>
            <person name="Lucas S."/>
            <person name="Lapidus A."/>
            <person name="Barry K."/>
            <person name="Detter J.C."/>
            <person name="Glavina del Rio T."/>
            <person name="Hammon N."/>
            <person name="Israni S."/>
            <person name="Dalin E."/>
            <person name="Tice H."/>
            <person name="Pitluck S."/>
            <person name="Sims D.R."/>
            <person name="Brettin T."/>
            <person name="Bruce D."/>
            <person name="Han C."/>
            <person name="Tapia R."/>
            <person name="Brainard J."/>
            <person name="Schmutz J."/>
            <person name="Larimer F."/>
            <person name="Land M."/>
            <person name="Hauser L."/>
            <person name="Kyrpides N."/>
            <person name="Mikhailova N."/>
            <person name="Brettar I."/>
            <person name="Klappenbach J."/>
            <person name="Konstantinidis K."/>
            <person name="Rodrigues J."/>
            <person name="Tiedje J."/>
            <person name="Richardson P."/>
        </authorList>
    </citation>
    <scope>NUCLEOTIDE SEQUENCE [LARGE SCALE GENOMIC DNA]</scope>
    <source>
        <strain>OS155 / ATCC BAA-1091</strain>
    </source>
</reference>
<accession>A3D0G1</accession>
<keyword id="KW-0963">Cytoplasm</keyword>
<keyword id="KW-0488">Methylation</keyword>
<keyword id="KW-0648">Protein biosynthesis</keyword>
<keyword id="KW-1185">Reference proteome</keyword>